<name>PEN2_ARATH</name>
<gene>
    <name type="ordered locus">At5g09310</name>
    <name type="ORF">T5E8.110</name>
</gene>
<evidence type="ECO:0000250" key="1"/>
<evidence type="ECO:0000255" key="2"/>
<evidence type="ECO:0000256" key="3">
    <source>
        <dbReference type="SAM" id="MobiDB-lite"/>
    </source>
</evidence>
<evidence type="ECO:0000305" key="4"/>
<comment type="function">
    <text evidence="1">Probable subunit of the gamma-secretase complex, an endoprotease complex that catalyzes the intramembrane cleavage of integral membrane proteins such as Notch receptors.</text>
</comment>
<comment type="subunit">
    <text evidence="1">Probable component of the gamma-secretase complex, a complex composed of a presenilin homodimer, nicastrin, APH1 and PEN2.</text>
</comment>
<comment type="subcellular location">
    <subcellularLocation>
        <location evidence="4">Membrane</location>
        <topology evidence="4">Multi-pass membrane protein</topology>
    </subcellularLocation>
</comment>
<comment type="similarity">
    <text evidence="4">Belongs to the PEN-2 family.</text>
</comment>
<proteinExistence type="evidence at transcript level"/>
<feature type="chain" id="PRO_0000190905" description="Probable gamma-secretase subunit PEN-2">
    <location>
        <begin position="1"/>
        <end position="146"/>
    </location>
</feature>
<feature type="topological domain" description="Lumenal" evidence="2">
    <location>
        <begin position="1"/>
        <end position="61"/>
    </location>
</feature>
<feature type="transmembrane region" description="Helical" evidence="2">
    <location>
        <begin position="62"/>
        <end position="82"/>
    </location>
</feature>
<feature type="topological domain" description="Cytoplasmic" evidence="2">
    <location>
        <begin position="83"/>
        <end position="98"/>
    </location>
</feature>
<feature type="transmembrane region" description="Helical" evidence="2">
    <location>
        <begin position="99"/>
        <end position="119"/>
    </location>
</feature>
<feature type="topological domain" description="Lumenal" evidence="2">
    <location>
        <begin position="120"/>
        <end position="146"/>
    </location>
</feature>
<feature type="region of interest" description="Disordered" evidence="3">
    <location>
        <begin position="1"/>
        <end position="26"/>
    </location>
</feature>
<feature type="compositionally biased region" description="Low complexity" evidence="3">
    <location>
        <begin position="9"/>
        <end position="19"/>
    </location>
</feature>
<sequence>MEATRSDDPSLNPIRNRNPNPNPNPNPLSTIISSAQVWPTIDGPLGLTEEASVDYARRFYKFGFALLPWLWFVNCFYFWPVLRHSRAFPQIRNYVVRSAIGFSVFTALLSAWALTFSIGGEQLFGPLYDKLVMYNVADRLGLSGLA</sequence>
<organism>
    <name type="scientific">Arabidopsis thaliana</name>
    <name type="common">Mouse-ear cress</name>
    <dbReference type="NCBI Taxonomy" id="3702"/>
    <lineage>
        <taxon>Eukaryota</taxon>
        <taxon>Viridiplantae</taxon>
        <taxon>Streptophyta</taxon>
        <taxon>Embryophyta</taxon>
        <taxon>Tracheophyta</taxon>
        <taxon>Spermatophyta</taxon>
        <taxon>Magnoliopsida</taxon>
        <taxon>eudicotyledons</taxon>
        <taxon>Gunneridae</taxon>
        <taxon>Pentapetalae</taxon>
        <taxon>rosids</taxon>
        <taxon>malvids</taxon>
        <taxon>Brassicales</taxon>
        <taxon>Brassicaceae</taxon>
        <taxon>Camelineae</taxon>
        <taxon>Arabidopsis</taxon>
    </lineage>
</organism>
<protein>
    <recommendedName>
        <fullName>Probable gamma-secretase subunit PEN-2</fullName>
    </recommendedName>
</protein>
<keyword id="KW-0472">Membrane</keyword>
<keyword id="KW-0914">Notch signaling pathway</keyword>
<keyword id="KW-1185">Reference proteome</keyword>
<keyword id="KW-0812">Transmembrane</keyword>
<keyword id="KW-1133">Transmembrane helix</keyword>
<dbReference type="EMBL" id="AL391712">
    <property type="protein sequence ID" value="CAC05457.1"/>
    <property type="molecule type" value="Genomic_DNA"/>
</dbReference>
<dbReference type="EMBL" id="CP002688">
    <property type="protein sequence ID" value="AED91373.1"/>
    <property type="molecule type" value="Genomic_DNA"/>
</dbReference>
<dbReference type="EMBL" id="AK118667">
    <property type="protein sequence ID" value="BAC43262.1"/>
    <property type="molecule type" value="mRNA"/>
</dbReference>
<dbReference type="EMBL" id="BT009650">
    <property type="protein sequence ID" value="AAP75800.1"/>
    <property type="molecule type" value="mRNA"/>
</dbReference>
<dbReference type="EMBL" id="AY088593">
    <property type="protein sequence ID" value="AAM66122.1"/>
    <property type="molecule type" value="mRNA"/>
</dbReference>
<dbReference type="RefSeq" id="NP_196493.1">
    <property type="nucleotide sequence ID" value="NM_120967.5"/>
</dbReference>
<dbReference type="SMR" id="Q9FY84"/>
<dbReference type="BioGRID" id="16068">
    <property type="interactions" value="3"/>
</dbReference>
<dbReference type="FunCoup" id="Q9FY84">
    <property type="interactions" value="224"/>
</dbReference>
<dbReference type="STRING" id="3702.Q9FY84"/>
<dbReference type="PaxDb" id="3702-AT5G09310.1"/>
<dbReference type="ProteomicsDB" id="236449"/>
<dbReference type="EnsemblPlants" id="AT5G09310.1">
    <property type="protein sequence ID" value="AT5G09310.1"/>
    <property type="gene ID" value="AT5G09310"/>
</dbReference>
<dbReference type="GeneID" id="830790"/>
<dbReference type="Gramene" id="AT5G09310.1">
    <property type="protein sequence ID" value="AT5G09310.1"/>
    <property type="gene ID" value="AT5G09310"/>
</dbReference>
<dbReference type="KEGG" id="ath:AT5G09310"/>
<dbReference type="Araport" id="AT5G09310"/>
<dbReference type="TAIR" id="AT5G09310">
    <property type="gene designation" value="PEN-2"/>
</dbReference>
<dbReference type="eggNOG" id="KOG3402">
    <property type="taxonomic scope" value="Eukaryota"/>
</dbReference>
<dbReference type="HOGENOM" id="CLU_124142_0_0_1"/>
<dbReference type="InParanoid" id="Q9FY84"/>
<dbReference type="OMA" id="QVWPTID"/>
<dbReference type="OrthoDB" id="524898at2759"/>
<dbReference type="PhylomeDB" id="Q9FY84"/>
<dbReference type="PRO" id="PR:Q9FY84"/>
<dbReference type="Proteomes" id="UP000006548">
    <property type="component" value="Chromosome 5"/>
</dbReference>
<dbReference type="ExpressionAtlas" id="Q9FY84">
    <property type="expression patterns" value="baseline and differential"/>
</dbReference>
<dbReference type="GO" id="GO:0005798">
    <property type="term" value="C:Golgi-associated vesicle"/>
    <property type="evidence" value="ECO:0000314"/>
    <property type="project" value="TAIR"/>
</dbReference>
<dbReference type="GO" id="GO:0016020">
    <property type="term" value="C:membrane"/>
    <property type="evidence" value="ECO:0007669"/>
    <property type="project" value="UniProtKB-SubCell"/>
</dbReference>
<dbReference type="GO" id="GO:0007219">
    <property type="term" value="P:Notch signaling pathway"/>
    <property type="evidence" value="ECO:0007669"/>
    <property type="project" value="UniProtKB-KW"/>
</dbReference>
<dbReference type="InterPro" id="IPR019379">
    <property type="entry name" value="Gamma_Secretase_Asp_P_PEN2"/>
</dbReference>
<dbReference type="PANTHER" id="PTHR16318">
    <property type="entry name" value="GAMMA-SECRETASE SUBUNIT PEN-2"/>
    <property type="match status" value="1"/>
</dbReference>
<dbReference type="PANTHER" id="PTHR16318:SF0">
    <property type="entry name" value="GAMMA-SECRETASE SUBUNIT PEN-2"/>
    <property type="match status" value="1"/>
</dbReference>
<dbReference type="Pfam" id="PF10251">
    <property type="entry name" value="PEN-2"/>
    <property type="match status" value="1"/>
</dbReference>
<accession>Q9FY84</accession>
<reference key="1">
    <citation type="journal article" date="2000" name="Nature">
        <title>Sequence and analysis of chromosome 5 of the plant Arabidopsis thaliana.</title>
        <authorList>
            <person name="Tabata S."/>
            <person name="Kaneko T."/>
            <person name="Nakamura Y."/>
            <person name="Kotani H."/>
            <person name="Kato T."/>
            <person name="Asamizu E."/>
            <person name="Miyajima N."/>
            <person name="Sasamoto S."/>
            <person name="Kimura T."/>
            <person name="Hosouchi T."/>
            <person name="Kawashima K."/>
            <person name="Kohara M."/>
            <person name="Matsumoto M."/>
            <person name="Matsuno A."/>
            <person name="Muraki A."/>
            <person name="Nakayama S."/>
            <person name="Nakazaki N."/>
            <person name="Naruo K."/>
            <person name="Okumura S."/>
            <person name="Shinpo S."/>
            <person name="Takeuchi C."/>
            <person name="Wada T."/>
            <person name="Watanabe A."/>
            <person name="Yamada M."/>
            <person name="Yasuda M."/>
            <person name="Sato S."/>
            <person name="de la Bastide M."/>
            <person name="Huang E."/>
            <person name="Spiegel L."/>
            <person name="Gnoj L."/>
            <person name="O'Shaughnessy A."/>
            <person name="Preston R."/>
            <person name="Habermann K."/>
            <person name="Murray J."/>
            <person name="Johnson D."/>
            <person name="Rohlfing T."/>
            <person name="Nelson J."/>
            <person name="Stoneking T."/>
            <person name="Pepin K."/>
            <person name="Spieth J."/>
            <person name="Sekhon M."/>
            <person name="Armstrong J."/>
            <person name="Becker M."/>
            <person name="Belter E."/>
            <person name="Cordum H."/>
            <person name="Cordes M."/>
            <person name="Courtney L."/>
            <person name="Courtney W."/>
            <person name="Dante M."/>
            <person name="Du H."/>
            <person name="Edwards J."/>
            <person name="Fryman J."/>
            <person name="Haakensen B."/>
            <person name="Lamar E."/>
            <person name="Latreille P."/>
            <person name="Leonard S."/>
            <person name="Meyer R."/>
            <person name="Mulvaney E."/>
            <person name="Ozersky P."/>
            <person name="Riley A."/>
            <person name="Strowmatt C."/>
            <person name="Wagner-McPherson C."/>
            <person name="Wollam A."/>
            <person name="Yoakum M."/>
            <person name="Bell M."/>
            <person name="Dedhia N."/>
            <person name="Parnell L."/>
            <person name="Shah R."/>
            <person name="Rodriguez M."/>
            <person name="Hoon See L."/>
            <person name="Vil D."/>
            <person name="Baker J."/>
            <person name="Kirchoff K."/>
            <person name="Toth K."/>
            <person name="King L."/>
            <person name="Bahret A."/>
            <person name="Miller B."/>
            <person name="Marra M.A."/>
            <person name="Martienssen R."/>
            <person name="McCombie W.R."/>
            <person name="Wilson R.K."/>
            <person name="Murphy G."/>
            <person name="Bancroft I."/>
            <person name="Volckaert G."/>
            <person name="Wambutt R."/>
            <person name="Duesterhoeft A."/>
            <person name="Stiekema W."/>
            <person name="Pohl T."/>
            <person name="Entian K.-D."/>
            <person name="Terryn N."/>
            <person name="Hartley N."/>
            <person name="Bent E."/>
            <person name="Johnson S."/>
            <person name="Langham S.-A."/>
            <person name="McCullagh B."/>
            <person name="Robben J."/>
            <person name="Grymonprez B."/>
            <person name="Zimmermann W."/>
            <person name="Ramsperger U."/>
            <person name="Wedler H."/>
            <person name="Balke K."/>
            <person name="Wedler E."/>
            <person name="Peters S."/>
            <person name="van Staveren M."/>
            <person name="Dirkse W."/>
            <person name="Mooijman P."/>
            <person name="Klein Lankhorst R."/>
            <person name="Weitzenegger T."/>
            <person name="Bothe G."/>
            <person name="Rose M."/>
            <person name="Hauf J."/>
            <person name="Berneiser S."/>
            <person name="Hempel S."/>
            <person name="Feldpausch M."/>
            <person name="Lamberth S."/>
            <person name="Villarroel R."/>
            <person name="Gielen J."/>
            <person name="Ardiles W."/>
            <person name="Bents O."/>
            <person name="Lemcke K."/>
            <person name="Kolesov G."/>
            <person name="Mayer K.F.X."/>
            <person name="Rudd S."/>
            <person name="Schoof H."/>
            <person name="Schueller C."/>
            <person name="Zaccaria P."/>
            <person name="Mewes H.-W."/>
            <person name="Bevan M."/>
            <person name="Fransz P.F."/>
        </authorList>
    </citation>
    <scope>NUCLEOTIDE SEQUENCE [LARGE SCALE GENOMIC DNA]</scope>
    <source>
        <strain>cv. Columbia</strain>
    </source>
</reference>
<reference key="2">
    <citation type="journal article" date="2017" name="Plant J.">
        <title>Araport11: a complete reannotation of the Arabidopsis thaliana reference genome.</title>
        <authorList>
            <person name="Cheng C.Y."/>
            <person name="Krishnakumar V."/>
            <person name="Chan A.P."/>
            <person name="Thibaud-Nissen F."/>
            <person name="Schobel S."/>
            <person name="Town C.D."/>
        </authorList>
    </citation>
    <scope>GENOME REANNOTATION</scope>
    <source>
        <strain>cv. Columbia</strain>
    </source>
</reference>
<reference key="3">
    <citation type="journal article" date="2002" name="Science">
        <title>Functional annotation of a full-length Arabidopsis cDNA collection.</title>
        <authorList>
            <person name="Seki M."/>
            <person name="Narusaka M."/>
            <person name="Kamiya A."/>
            <person name="Ishida J."/>
            <person name="Satou M."/>
            <person name="Sakurai T."/>
            <person name="Nakajima M."/>
            <person name="Enju A."/>
            <person name="Akiyama K."/>
            <person name="Oono Y."/>
            <person name="Muramatsu M."/>
            <person name="Hayashizaki Y."/>
            <person name="Kawai J."/>
            <person name="Carninci P."/>
            <person name="Itoh M."/>
            <person name="Ishii Y."/>
            <person name="Arakawa T."/>
            <person name="Shibata K."/>
            <person name="Shinagawa A."/>
            <person name="Shinozaki K."/>
        </authorList>
    </citation>
    <scope>NUCLEOTIDE SEQUENCE [LARGE SCALE MRNA]</scope>
    <source>
        <strain>cv. Columbia</strain>
    </source>
</reference>
<reference key="4">
    <citation type="journal article" date="2003" name="Science">
        <title>Empirical analysis of transcriptional activity in the Arabidopsis genome.</title>
        <authorList>
            <person name="Yamada K."/>
            <person name="Lim J."/>
            <person name="Dale J.M."/>
            <person name="Chen H."/>
            <person name="Shinn P."/>
            <person name="Palm C.J."/>
            <person name="Southwick A.M."/>
            <person name="Wu H.C."/>
            <person name="Kim C.J."/>
            <person name="Nguyen M."/>
            <person name="Pham P.K."/>
            <person name="Cheuk R.F."/>
            <person name="Karlin-Newmann G."/>
            <person name="Liu S.X."/>
            <person name="Lam B."/>
            <person name="Sakano H."/>
            <person name="Wu T."/>
            <person name="Yu G."/>
            <person name="Miranda M."/>
            <person name="Quach H.L."/>
            <person name="Tripp M."/>
            <person name="Chang C.H."/>
            <person name="Lee J.M."/>
            <person name="Toriumi M.J."/>
            <person name="Chan M.M."/>
            <person name="Tang C.C."/>
            <person name="Onodera C.S."/>
            <person name="Deng J.M."/>
            <person name="Akiyama K."/>
            <person name="Ansari Y."/>
            <person name="Arakawa T."/>
            <person name="Banh J."/>
            <person name="Banno F."/>
            <person name="Bowser L."/>
            <person name="Brooks S.Y."/>
            <person name="Carninci P."/>
            <person name="Chao Q."/>
            <person name="Choy N."/>
            <person name="Enju A."/>
            <person name="Goldsmith A.D."/>
            <person name="Gurjal M."/>
            <person name="Hansen N.F."/>
            <person name="Hayashizaki Y."/>
            <person name="Johnson-Hopson C."/>
            <person name="Hsuan V.W."/>
            <person name="Iida K."/>
            <person name="Karnes M."/>
            <person name="Khan S."/>
            <person name="Koesema E."/>
            <person name="Ishida J."/>
            <person name="Jiang P.X."/>
            <person name="Jones T."/>
            <person name="Kawai J."/>
            <person name="Kamiya A."/>
            <person name="Meyers C."/>
            <person name="Nakajima M."/>
            <person name="Narusaka M."/>
            <person name="Seki M."/>
            <person name="Sakurai T."/>
            <person name="Satou M."/>
            <person name="Tamse R."/>
            <person name="Vaysberg M."/>
            <person name="Wallender E.K."/>
            <person name="Wong C."/>
            <person name="Yamamura Y."/>
            <person name="Yuan S."/>
            <person name="Shinozaki K."/>
            <person name="Davis R.W."/>
            <person name="Theologis A."/>
            <person name="Ecker J.R."/>
        </authorList>
    </citation>
    <scope>NUCLEOTIDE SEQUENCE [LARGE SCALE MRNA]</scope>
    <source>
        <strain>cv. Columbia</strain>
    </source>
</reference>
<reference key="5">
    <citation type="submission" date="2002-03" db="EMBL/GenBank/DDBJ databases">
        <title>Full-length cDNA from Arabidopsis thaliana.</title>
        <authorList>
            <person name="Brover V.V."/>
            <person name="Troukhan M.E."/>
            <person name="Alexandrov N.A."/>
            <person name="Lu Y.-P."/>
            <person name="Flavell R.B."/>
            <person name="Feldmann K.A."/>
        </authorList>
    </citation>
    <scope>NUCLEOTIDE SEQUENCE [LARGE SCALE MRNA]</scope>
</reference>